<sequence length="206" mass="23259">MKTTHTSLPFAGHTLHFVEFDPANFCEQDLLWLPHYAQLQHAGRKRKTEHLAGRIAAVYALREYGYKCVPAIGELRQPVWPAEVYGSISHCGTTALAVVSRQPIGIDIEEIFSVQTARELTDNIITPAEHERLADCGLAFSLALTLAFSAKESAFKASEIQTDAGFLDYQIISWNKQQVIIHRENEMFAVHWQIKEKIVITLCQHD</sequence>
<gene>
    <name evidence="7" type="primary">entD</name>
    <name type="ordered locus">b0583</name>
    <name type="ordered locus">JW5085</name>
</gene>
<feature type="chain" id="PRO_0000206069" description="Enterobactin synthase component D">
    <location>
        <begin position="1"/>
        <end position="206"/>
    </location>
</feature>
<feature type="binding site" evidence="1">
    <location>
        <position position="107"/>
    </location>
    <ligand>
        <name>Mg(2+)</name>
        <dbReference type="ChEBI" id="CHEBI:18420"/>
    </ligand>
</feature>
<feature type="binding site" evidence="1">
    <location>
        <position position="109"/>
    </location>
    <ligand>
        <name>Mg(2+)</name>
        <dbReference type="ChEBI" id="CHEBI:18420"/>
    </ligand>
</feature>
<feature type="binding site" evidence="1">
    <location>
        <position position="152"/>
    </location>
    <ligand>
        <name>Mg(2+)</name>
        <dbReference type="ChEBI" id="CHEBI:18420"/>
    </ligand>
</feature>
<feature type="sequence conflict" description="In Ref. 3; CAB57861." evidence="9" ref="3">
    <original>EL</original>
    <variation>DV</variation>
    <location>
        <begin position="74"/>
        <end position="75"/>
    </location>
</feature>
<organism>
    <name type="scientific">Escherichia coli (strain K12)</name>
    <dbReference type="NCBI Taxonomy" id="83333"/>
    <lineage>
        <taxon>Bacteria</taxon>
        <taxon>Pseudomonadati</taxon>
        <taxon>Pseudomonadota</taxon>
        <taxon>Gammaproteobacteria</taxon>
        <taxon>Enterobacterales</taxon>
        <taxon>Enterobacteriaceae</taxon>
        <taxon>Escherichia</taxon>
    </lineage>
</organism>
<name>ENTD_ECOLI</name>
<evidence type="ECO:0000250" key="1"/>
<evidence type="ECO:0000250" key="2">
    <source>
        <dbReference type="UniProtKB" id="P24224"/>
    </source>
</evidence>
<evidence type="ECO:0000269" key="3">
    <source>
    </source>
</evidence>
<evidence type="ECO:0000269" key="4">
    <source>
    </source>
</evidence>
<evidence type="ECO:0000269" key="5">
    <source>
    </source>
</evidence>
<evidence type="ECO:0000269" key="6">
    <source>
    </source>
</evidence>
<evidence type="ECO:0000303" key="7">
    <source>
    </source>
</evidence>
<evidence type="ECO:0000303" key="8">
    <source>
    </source>
</evidence>
<evidence type="ECO:0000305" key="9"/>
<evidence type="ECO:0000305" key="10">
    <source>
    </source>
</evidence>
<keyword id="KW-0259">Enterobactin biosynthesis</keyword>
<keyword id="KW-0460">Magnesium</keyword>
<keyword id="KW-0472">Membrane</keyword>
<keyword id="KW-0479">Metal-binding</keyword>
<keyword id="KW-1185">Reference proteome</keyword>
<keyword id="KW-0808">Transferase</keyword>
<dbReference type="EC" id="2.7.8.-" evidence="5 6"/>
<dbReference type="EMBL" id="X17426">
    <property type="protein sequence ID" value="CAB57861.1"/>
    <property type="status" value="ALT_INIT"/>
    <property type="molecule type" value="Genomic_DNA"/>
</dbReference>
<dbReference type="EMBL" id="U82598">
    <property type="protein sequence ID" value="AAB40782.1"/>
    <property type="status" value="ALT_INIT"/>
    <property type="molecule type" value="Genomic_DNA"/>
</dbReference>
<dbReference type="EMBL" id="U00096">
    <property type="protein sequence ID" value="AAC73684.2"/>
    <property type="molecule type" value="Genomic_DNA"/>
</dbReference>
<dbReference type="EMBL" id="AP009048">
    <property type="protein sequence ID" value="BAA35224.2"/>
    <property type="status" value="ALT_INIT"/>
    <property type="molecule type" value="Genomic_DNA"/>
</dbReference>
<dbReference type="PIR" id="E64791">
    <property type="entry name" value="E64791"/>
</dbReference>
<dbReference type="RefSeq" id="NP_415115.2">
    <property type="nucleotide sequence ID" value="NC_000913.3"/>
</dbReference>
<dbReference type="RefSeq" id="WP_001749708.1">
    <property type="nucleotide sequence ID" value="NZ_STEB01000047.1"/>
</dbReference>
<dbReference type="SMR" id="P19925"/>
<dbReference type="BioGRID" id="4260709">
    <property type="interactions" value="88"/>
</dbReference>
<dbReference type="BioGRID" id="849580">
    <property type="interactions" value="1"/>
</dbReference>
<dbReference type="FunCoup" id="P19925">
    <property type="interactions" value="19"/>
</dbReference>
<dbReference type="IntAct" id="P19925">
    <property type="interactions" value="1"/>
</dbReference>
<dbReference type="STRING" id="511145.b0583"/>
<dbReference type="PaxDb" id="511145-b0583"/>
<dbReference type="EnsemblBacteria" id="AAC73684">
    <property type="protein sequence ID" value="AAC73684"/>
    <property type="gene ID" value="b0583"/>
</dbReference>
<dbReference type="GeneID" id="945194"/>
<dbReference type="KEGG" id="ecj:JW5085"/>
<dbReference type="KEGG" id="eco:b0583"/>
<dbReference type="PATRIC" id="fig|511145.12.peg.608"/>
<dbReference type="EchoBASE" id="EB0258"/>
<dbReference type="eggNOG" id="COG2977">
    <property type="taxonomic scope" value="Bacteria"/>
</dbReference>
<dbReference type="HOGENOM" id="CLU_075076_1_0_6"/>
<dbReference type="InParanoid" id="P19925"/>
<dbReference type="OrthoDB" id="8210607at2"/>
<dbReference type="PhylomeDB" id="P19925"/>
<dbReference type="BioCyc" id="EcoCyc:ENTD-MONOMER"/>
<dbReference type="BioCyc" id="MetaCyc:ENTD-MONOMER"/>
<dbReference type="BRENDA" id="2.7.8.7">
    <property type="organism ID" value="2026"/>
</dbReference>
<dbReference type="UniPathway" id="UPA00017"/>
<dbReference type="PRO" id="PR:P19925"/>
<dbReference type="Proteomes" id="UP000000625">
    <property type="component" value="Chromosome"/>
</dbReference>
<dbReference type="GO" id="GO:0009366">
    <property type="term" value="C:enterobactin synthetase complex"/>
    <property type="evidence" value="ECO:0000314"/>
    <property type="project" value="EcoCyc"/>
</dbReference>
<dbReference type="GO" id="GO:0016020">
    <property type="term" value="C:membrane"/>
    <property type="evidence" value="ECO:0007669"/>
    <property type="project" value="UniProtKB-SubCell"/>
</dbReference>
<dbReference type="GO" id="GO:0008897">
    <property type="term" value="F:holo-[acyl-carrier-protein] synthase activity"/>
    <property type="evidence" value="ECO:0000314"/>
    <property type="project" value="EcoCyc"/>
</dbReference>
<dbReference type="GO" id="GO:0000287">
    <property type="term" value="F:magnesium ion binding"/>
    <property type="evidence" value="ECO:0007669"/>
    <property type="project" value="InterPro"/>
</dbReference>
<dbReference type="GO" id="GO:0009239">
    <property type="term" value="P:enterobactin biosynthetic process"/>
    <property type="evidence" value="ECO:0000315"/>
    <property type="project" value="EcoCyc"/>
</dbReference>
<dbReference type="GO" id="GO:0009237">
    <property type="term" value="P:siderophore metabolic process"/>
    <property type="evidence" value="ECO:0000318"/>
    <property type="project" value="GO_Central"/>
</dbReference>
<dbReference type="FunFam" id="3.90.470.20:FF:000012">
    <property type="entry name" value="Enterobactin synthase component D"/>
    <property type="match status" value="1"/>
</dbReference>
<dbReference type="Gene3D" id="3.90.470.20">
    <property type="entry name" value="4'-phosphopantetheinyl transferase domain"/>
    <property type="match status" value="1"/>
</dbReference>
<dbReference type="InterPro" id="IPR008278">
    <property type="entry name" value="4-PPantetheinyl_Trfase_dom"/>
</dbReference>
<dbReference type="InterPro" id="IPR037143">
    <property type="entry name" value="4-PPantetheinyl_Trfase_dom_sf"/>
</dbReference>
<dbReference type="InterPro" id="IPR041354">
    <property type="entry name" value="4PPT_N"/>
</dbReference>
<dbReference type="InterPro" id="IPR003542">
    <property type="entry name" value="Enbac_synth_compD-like"/>
</dbReference>
<dbReference type="NCBIfam" id="NF007604">
    <property type="entry name" value="PRK10251.1"/>
    <property type="match status" value="1"/>
</dbReference>
<dbReference type="PANTHER" id="PTHR38096">
    <property type="entry name" value="ENTEROBACTIN SYNTHASE COMPONENT D"/>
    <property type="match status" value="1"/>
</dbReference>
<dbReference type="PANTHER" id="PTHR38096:SF1">
    <property type="entry name" value="ENTEROBACTIN SYNTHASE COMPONENT D"/>
    <property type="match status" value="1"/>
</dbReference>
<dbReference type="Pfam" id="PF17837">
    <property type="entry name" value="4PPT_N"/>
    <property type="match status" value="1"/>
</dbReference>
<dbReference type="Pfam" id="PF01648">
    <property type="entry name" value="ACPS"/>
    <property type="match status" value="1"/>
</dbReference>
<dbReference type="PRINTS" id="PR01399">
    <property type="entry name" value="ENTSNTHTASED"/>
</dbReference>
<dbReference type="SUPFAM" id="SSF56214">
    <property type="entry name" value="4'-phosphopantetheinyl transferase"/>
    <property type="match status" value="1"/>
</dbReference>
<protein>
    <recommendedName>
        <fullName evidence="8">Enterobactin synthase component D</fullName>
    </recommendedName>
    <alternativeName>
        <fullName evidence="8">4'-phosphopantetheinyl transferase EntD</fullName>
        <ecNumber evidence="5 6">2.7.8.-</ecNumber>
    </alternativeName>
    <alternativeName>
        <fullName evidence="8">Enterochelin synthase D</fullName>
    </alternativeName>
</protein>
<reference key="1">
    <citation type="journal article" date="1989" name="J. Gen. Microbiol.">
        <title>The entD gene of the Escherichia coli K12 enterobactin gene cluster.</title>
        <authorList>
            <person name="Coderre P.E."/>
            <person name="Earhart C.F."/>
        </authorList>
    </citation>
    <scope>NUCLEOTIDE SEQUENCE [GENOMIC DNA]</scope>
    <source>
        <strain>K12</strain>
    </source>
</reference>
<reference key="2">
    <citation type="journal article" date="1990" name="J. Gen. Microbiol.">
        <authorList>
            <person name="Coderre P.E."/>
            <person name="Earhart C.F."/>
        </authorList>
    </citation>
    <scope>ERRATUM OF PUBMED:2533240</scope>
</reference>
<reference key="3">
    <citation type="journal article" date="1989" name="Mol. Microbiol.">
        <title>The Escherichia coli enterobactin biosynthesis gene, entD: nucleotide sequence and membrane localization of its protein product.</title>
        <authorList>
            <person name="Armstrong S.K."/>
            <person name="Pettis G.S."/>
            <person name="Forrester L.J."/>
            <person name="McIntosh M.A."/>
        </authorList>
    </citation>
    <scope>NUCLEOTIDE SEQUENCE [GENOMIC DNA]</scope>
    <scope>SUBCELLULAR LOCATION</scope>
</reference>
<reference key="4">
    <citation type="journal article" date="1996" name="DNA Res.">
        <title>A 718-kb DNA sequence of the Escherichia coli K-12 genome corresponding to the 12.7-28.0 min region on the linkage map.</title>
        <authorList>
            <person name="Oshima T."/>
            <person name="Aiba H."/>
            <person name="Baba T."/>
            <person name="Fujita K."/>
            <person name="Hayashi K."/>
            <person name="Honjo A."/>
            <person name="Ikemoto K."/>
            <person name="Inada T."/>
            <person name="Itoh T."/>
            <person name="Kajihara M."/>
            <person name="Kanai K."/>
            <person name="Kashimoto K."/>
            <person name="Kimura S."/>
            <person name="Kitagawa M."/>
            <person name="Makino K."/>
            <person name="Masuda S."/>
            <person name="Miki T."/>
            <person name="Mizobuchi K."/>
            <person name="Mori H."/>
            <person name="Motomura K."/>
            <person name="Nakamura Y."/>
            <person name="Nashimoto H."/>
            <person name="Nishio Y."/>
            <person name="Saito N."/>
            <person name="Sampei G."/>
            <person name="Seki Y."/>
            <person name="Tagami H."/>
            <person name="Takemoto K."/>
            <person name="Wada C."/>
            <person name="Yamamoto Y."/>
            <person name="Yano M."/>
            <person name="Horiuchi T."/>
        </authorList>
    </citation>
    <scope>NUCLEOTIDE SEQUENCE [LARGE SCALE GENOMIC DNA]</scope>
    <source>
        <strain>K12 / W3110 / ATCC 27325 / DSM 5911</strain>
    </source>
</reference>
<reference key="5">
    <citation type="submission" date="1997-01" db="EMBL/GenBank/DDBJ databases">
        <title>Sequence of minutes 4-25 of Escherichia coli.</title>
        <authorList>
            <person name="Chung E."/>
            <person name="Allen E."/>
            <person name="Araujo R."/>
            <person name="Aparicio A.M."/>
            <person name="Davis K."/>
            <person name="Duncan M."/>
            <person name="Federspiel N."/>
            <person name="Hyman R."/>
            <person name="Kalman S."/>
            <person name="Komp C."/>
            <person name="Kurdi O."/>
            <person name="Lew H."/>
            <person name="Lin D."/>
            <person name="Namath A."/>
            <person name="Oefner P."/>
            <person name="Roberts D."/>
            <person name="Schramm S."/>
            <person name="Davis R.W."/>
        </authorList>
    </citation>
    <scope>NUCLEOTIDE SEQUENCE [LARGE SCALE GENOMIC DNA]</scope>
    <source>
        <strain>K12 / MG1655 / ATCC 47076</strain>
    </source>
</reference>
<reference key="6">
    <citation type="journal article" date="1997" name="Science">
        <title>The complete genome sequence of Escherichia coli K-12.</title>
        <authorList>
            <person name="Blattner F.R."/>
            <person name="Plunkett G. III"/>
            <person name="Bloch C.A."/>
            <person name="Perna N.T."/>
            <person name="Burland V."/>
            <person name="Riley M."/>
            <person name="Collado-Vides J."/>
            <person name="Glasner J.D."/>
            <person name="Rode C.K."/>
            <person name="Mayhew G.F."/>
            <person name="Gregor J."/>
            <person name="Davis N.W."/>
            <person name="Kirkpatrick H.A."/>
            <person name="Goeden M.A."/>
            <person name="Rose D.J."/>
            <person name="Mau B."/>
            <person name="Shao Y."/>
        </authorList>
    </citation>
    <scope>NUCLEOTIDE SEQUENCE [LARGE SCALE GENOMIC DNA]</scope>
    <source>
        <strain>K12 / MG1655 / ATCC 47076</strain>
    </source>
</reference>
<reference key="7">
    <citation type="journal article" date="2006" name="Mol. Syst. Biol.">
        <title>Highly accurate genome sequences of Escherichia coli K-12 strains MG1655 and W3110.</title>
        <authorList>
            <person name="Hayashi K."/>
            <person name="Morooka N."/>
            <person name="Yamamoto Y."/>
            <person name="Fujita K."/>
            <person name="Isono K."/>
            <person name="Choi S."/>
            <person name="Ohtsubo E."/>
            <person name="Baba T."/>
            <person name="Wanner B.L."/>
            <person name="Mori H."/>
            <person name="Horiuchi T."/>
        </authorList>
    </citation>
    <scope>NUCLEOTIDE SEQUENCE [LARGE SCALE GENOMIC DNA]</scope>
    <source>
        <strain>K12 / W3110 / ATCC 27325 / DSM 5911</strain>
    </source>
</reference>
<reference key="8">
    <citation type="journal article" date="1996" name="Chem. Biol.">
        <title>A new enzyme superfamily -- the phosphopantetheinyl transferases.</title>
        <authorList>
            <person name="Lambalot R.H."/>
            <person name="Gehring A.M."/>
            <person name="Flugel R.S."/>
            <person name="Zuber P."/>
            <person name="LaCelle M."/>
            <person name="Marahiel M.A."/>
            <person name="Reid R."/>
            <person name="Khosla C."/>
            <person name="Walsh C.T."/>
        </authorList>
    </citation>
    <scope>FUNCTION</scope>
</reference>
<reference key="9">
    <citation type="journal article" date="1997" name="Biochemistry">
        <title>Enterobactin biosynthesis in Escherichia coli: isochorismate lyase (EntB) is a bifunctional enzyme that is phosphopantetheinylated by EntD and then acylated by EntE using ATP and 2,3-dihydroxybenzoate.</title>
        <authorList>
            <person name="Gehring A.M."/>
            <person name="Bradley K.A."/>
            <person name="Walsh C.T."/>
        </authorList>
    </citation>
    <scope>FUNCTION</scope>
    <scope>CATALYTIC ACTIVITY</scope>
    <scope>BIOPHYSICOCHEMICAL PROPERTIES</scope>
    <source>
        <strain>BL21-DE3</strain>
    </source>
</reference>
<reference key="10">
    <citation type="journal article" date="1998" name="Biochemistry">
        <title>Reconstitution and characterization of the Escherichia coli enterobactin synthetase from EntB, EntE, and EntF.</title>
        <authorList>
            <person name="Gehring A.M."/>
            <person name="Mori I."/>
            <person name="Walsh C.T."/>
        </authorList>
    </citation>
    <scope>FUNCTION</scope>
    <scope>CATALYTIC ACTIVITY</scope>
    <scope>SUBUNIT</scope>
</reference>
<accession>P19925</accession>
<accession>P77092</accession>
<proteinExistence type="evidence at protein level"/>
<comment type="function">
    <text evidence="4 5 6">Involved in the biosynthesis of the siderophore enterobactin (enterochelin), which is a macrocyclic trimeric lactone of N-(2,3-dihydroxybenzoyl)-serine. The serine trilactone serves as a scaffolding for the three catechol functionalities that provide hexadentate coordination for the tightly ligated iron(2+) atoms. Plays an essential role in the assembly of the enterobactin by catalyzing the transfer of the 4'-phosphopantetheine (Ppant) moiety from coenzyme A to the apo-domains of both EntB (ArCP domain) and EntF (PCP domain) to yield their holo-forms which make them competent for the activation of 2,3-dihydroxybenzoate (DHB) and L-serine, respectively.</text>
</comment>
<comment type="catalytic activity">
    <reaction evidence="5 6">
        <text>apo-[aryl-carrier protein] + CoA = holo-[aryl-carrier protein] + adenosine 3',5'-bisphosphate + H(+)</text>
        <dbReference type="Rhea" id="RHEA:48404"/>
        <dbReference type="Rhea" id="RHEA-COMP:15903"/>
        <dbReference type="Rhea" id="RHEA-COMP:17557"/>
        <dbReference type="ChEBI" id="CHEBI:15378"/>
        <dbReference type="ChEBI" id="CHEBI:29999"/>
        <dbReference type="ChEBI" id="CHEBI:57287"/>
        <dbReference type="ChEBI" id="CHEBI:58343"/>
        <dbReference type="ChEBI" id="CHEBI:64479"/>
    </reaction>
</comment>
<comment type="catalytic activity">
    <reaction evidence="5 6">
        <text>apo-[peptidyl-carrier protein] + CoA = holo-[peptidyl-carrier protein] + adenosine 3',5'-bisphosphate + H(+)</text>
        <dbReference type="Rhea" id="RHEA:46228"/>
        <dbReference type="Rhea" id="RHEA-COMP:11479"/>
        <dbReference type="Rhea" id="RHEA-COMP:11480"/>
        <dbReference type="ChEBI" id="CHEBI:15378"/>
        <dbReference type="ChEBI" id="CHEBI:29999"/>
        <dbReference type="ChEBI" id="CHEBI:57287"/>
        <dbReference type="ChEBI" id="CHEBI:58343"/>
        <dbReference type="ChEBI" id="CHEBI:64479"/>
    </reaction>
</comment>
<comment type="cofactor">
    <cofactor evidence="2">
        <name>Mg(2+)</name>
        <dbReference type="ChEBI" id="CHEBI:18420"/>
    </cofactor>
</comment>
<comment type="biophysicochemical properties">
    <kinetics>
        <KM evidence="5">6.5 uM for EntB (at pH 7.5 and 37 degrees Celsius)</KM>
        <text evidence="5">kcat is 5.1 min(-1) for transferase activity with EntB as substrate (at pH 7.5 and 37 degrees Celsius).</text>
    </kinetics>
</comment>
<comment type="pathway">
    <text evidence="10">Siderophore biosynthesis; enterobactin biosynthesis.</text>
</comment>
<comment type="subunit">
    <text evidence="6">EntB, EntD, EntE, and EntF form a multienzyme complex called enterobactin synthase.</text>
</comment>
<comment type="subcellular location">
    <subcellularLocation>
        <location evidence="3">Membrane</location>
    </subcellularLocation>
</comment>
<comment type="miscellaneous">
    <text evidence="5">Deletion of the C-terminal 25 residues of EntB results in very strong decrease of the catalytic efficiency of EntD.</text>
</comment>
<comment type="similarity">
    <text evidence="9">Belongs to the P-Pant transferase superfamily. EntD family.</text>
</comment>
<comment type="sequence caution" evidence="9">
    <conflict type="erroneous initiation">
        <sequence resource="EMBL-CDS" id="AAB40782"/>
    </conflict>
    <text>Extended N-terminus.</text>
</comment>
<comment type="sequence caution" evidence="9">
    <conflict type="erroneous initiation">
        <sequence resource="EMBL-CDS" id="BAA35224"/>
    </conflict>
    <text>Extended N-terminus.</text>
</comment>
<comment type="sequence caution" evidence="9">
    <conflict type="erroneous initiation">
        <sequence resource="EMBL-CDS" id="CAB57861"/>
    </conflict>
    <text>Extended N-terminus.</text>
</comment>